<accession>G2IQQ5</accession>
<accession>Q9KWL6</accession>
<proteinExistence type="evidence at protein level"/>
<dbReference type="EC" id="4.2.1.-" evidence="2 3"/>
<dbReference type="EMBL" id="AB035121">
    <property type="protein sequence ID" value="BAA97116.1"/>
    <property type="molecule type" value="Genomic_DNA"/>
</dbReference>
<dbReference type="EMBL" id="AB073227">
    <property type="protein sequence ID" value="BAB88741.1"/>
    <property type="molecule type" value="Genomic_DNA"/>
</dbReference>
<dbReference type="EMBL" id="AP012222">
    <property type="protein sequence ID" value="BAK65927.1"/>
    <property type="molecule type" value="Genomic_DNA"/>
</dbReference>
<dbReference type="RefSeq" id="WP_014075578.1">
    <property type="nucleotide sequence ID" value="NC_015976.1"/>
</dbReference>
<dbReference type="PDB" id="6DWV">
    <property type="method" value="X-ray"/>
    <property type="resolution" value="2.20 A"/>
    <property type="chains" value="A/B/C/D=1-341"/>
</dbReference>
<dbReference type="PDB" id="6DXQ">
    <property type="method" value="X-ray"/>
    <property type="resolution" value="2.02 A"/>
    <property type="chains" value="A/B/C/D=2-341"/>
</dbReference>
<dbReference type="PDB" id="6DXS">
    <property type="method" value="X-ray"/>
    <property type="resolution" value="1.65 A"/>
    <property type="chains" value="A/B/C/D=2-341"/>
</dbReference>
<dbReference type="PDBsum" id="6DWV"/>
<dbReference type="PDBsum" id="6DXQ"/>
<dbReference type="PDBsum" id="6DXS"/>
<dbReference type="SMR" id="G2IQQ5"/>
<dbReference type="STRING" id="627192.SLG_12520"/>
<dbReference type="KEGG" id="ssy:SLG_12520"/>
<dbReference type="eggNOG" id="COG2159">
    <property type="taxonomic scope" value="Bacteria"/>
</dbReference>
<dbReference type="HOGENOM" id="CLU_813586_0_0_5"/>
<dbReference type="OrthoDB" id="149172at2"/>
<dbReference type="BRENDA" id="4.2.1.83">
    <property type="organism ID" value="2280"/>
</dbReference>
<dbReference type="STRENDA-DB" id="SZNKTZ">
    <property type="experiment" value="LigJ Hydratase wild-type - new"/>
</dbReference>
<dbReference type="UniPathway" id="UPA00892"/>
<dbReference type="Proteomes" id="UP000001275">
    <property type="component" value="Chromosome"/>
</dbReference>
<dbReference type="GO" id="GO:0005737">
    <property type="term" value="C:cytoplasm"/>
    <property type="evidence" value="ECO:0007669"/>
    <property type="project" value="TreeGrafter"/>
</dbReference>
<dbReference type="GO" id="GO:0016831">
    <property type="term" value="F:carboxy-lyase activity"/>
    <property type="evidence" value="ECO:0007669"/>
    <property type="project" value="InterPro"/>
</dbReference>
<dbReference type="GO" id="GO:0016787">
    <property type="term" value="F:hydrolase activity"/>
    <property type="evidence" value="ECO:0007669"/>
    <property type="project" value="InterPro"/>
</dbReference>
<dbReference type="GO" id="GO:0046872">
    <property type="term" value="F:metal ion binding"/>
    <property type="evidence" value="ECO:0007669"/>
    <property type="project" value="UniProtKB-KW"/>
</dbReference>
<dbReference type="GO" id="GO:0046274">
    <property type="term" value="P:lignin catabolic process"/>
    <property type="evidence" value="ECO:0007669"/>
    <property type="project" value="UniProtKB-UniPathway"/>
</dbReference>
<dbReference type="Gene3D" id="3.20.20.140">
    <property type="entry name" value="Metal-dependent hydrolases"/>
    <property type="match status" value="1"/>
</dbReference>
<dbReference type="InterPro" id="IPR032465">
    <property type="entry name" value="ACMSD"/>
</dbReference>
<dbReference type="InterPro" id="IPR006680">
    <property type="entry name" value="Amidohydro-rel"/>
</dbReference>
<dbReference type="InterPro" id="IPR032466">
    <property type="entry name" value="Metal_Hydrolase"/>
</dbReference>
<dbReference type="PANTHER" id="PTHR21240">
    <property type="entry name" value="2-AMINO-3-CARBOXYLMUCONATE-6-SEMIALDEHYDE DECARBOXYLASE"/>
    <property type="match status" value="1"/>
</dbReference>
<dbReference type="PANTHER" id="PTHR21240:SF28">
    <property type="entry name" value="ISO-OROTATE DECARBOXYLASE (EUROFUNG)"/>
    <property type="match status" value="1"/>
</dbReference>
<dbReference type="Pfam" id="PF04909">
    <property type="entry name" value="Amidohydro_2"/>
    <property type="match status" value="1"/>
</dbReference>
<dbReference type="SUPFAM" id="SSF51556">
    <property type="entry name" value="Metallo-dependent hydrolases"/>
    <property type="match status" value="1"/>
</dbReference>
<feature type="chain" id="PRO_0000446301" description="2-keto-4-carboxy-3-hexenedioate hydratase">
    <location>
        <begin position="1"/>
        <end position="341"/>
    </location>
</feature>
<feature type="active site" description="Proton donor/acceptor" evidence="8">
    <location>
        <position position="284"/>
    </location>
</feature>
<feature type="binding site" evidence="3 10">
    <location>
        <position position="8"/>
    </location>
    <ligand>
        <name>Zn(2+)</name>
        <dbReference type="ChEBI" id="CHEBI:29105"/>
    </ligand>
</feature>
<feature type="binding site" evidence="3 10">
    <location>
        <position position="10"/>
    </location>
    <ligand>
        <name>Zn(2+)</name>
        <dbReference type="ChEBI" id="CHEBI:29105"/>
    </ligand>
</feature>
<feature type="binding site" evidence="3 11">
    <location>
        <begin position="71"/>
        <end position="73"/>
    </location>
    <ligand>
        <name>substrate</name>
    </ligand>
</feature>
<feature type="binding site" evidence="3 10">
    <location>
        <position position="178"/>
    </location>
    <ligand>
        <name>Zn(2+)</name>
        <dbReference type="ChEBI" id="CHEBI:29105"/>
    </ligand>
</feature>
<feature type="binding site" evidence="3 11">
    <location>
        <position position="194"/>
    </location>
    <ligand>
        <name>substrate</name>
    </ligand>
</feature>
<feature type="binding site" evidence="3 11">
    <location>
        <position position="223"/>
    </location>
    <ligand>
        <name>substrate</name>
    </ligand>
</feature>
<feature type="binding site" evidence="3 11">
    <location>
        <position position="290"/>
    </location>
    <ligand>
        <name>substrate</name>
    </ligand>
</feature>
<feature type="mutagenesis site" description="2.4-fold reduction in catalytic rate." evidence="3">
    <original>T</original>
    <variation>A</variation>
    <location>
        <position position="190"/>
    </location>
</feature>
<feature type="mutagenesis site" description="7.8-fold reduction in catalytic rate." evidence="3">
    <original>Y</original>
    <variation>F</variation>
    <location>
        <position position="194"/>
    </location>
</feature>
<feature type="mutagenesis site" description="91-fold reduction in catalytic rate. 30-fold decrease in affinity for the substrate KCH." evidence="3">
    <original>H</original>
    <variation>N</variation>
    <location>
        <position position="223"/>
    </location>
</feature>
<feature type="mutagenesis site" description="Loss of enzymatic activity." evidence="3">
    <original>E</original>
    <variation>Q</variation>
    <location>
        <position position="284"/>
    </location>
</feature>
<feature type="strand" evidence="15">
    <location>
        <begin position="5"/>
        <end position="11"/>
    </location>
</feature>
<feature type="helix" evidence="16">
    <location>
        <begin position="16"/>
        <end position="30"/>
    </location>
</feature>
<feature type="helix" evidence="16">
    <location>
        <begin position="43"/>
        <end position="52"/>
    </location>
</feature>
<feature type="helix" evidence="16">
    <location>
        <begin position="54"/>
        <end position="61"/>
    </location>
</feature>
<feature type="strand" evidence="16">
    <location>
        <begin position="65"/>
        <end position="70"/>
    </location>
</feature>
<feature type="helix" evidence="16">
    <location>
        <begin position="72"/>
        <end position="75"/>
    </location>
</feature>
<feature type="helix" evidence="16">
    <location>
        <begin position="82"/>
        <end position="102"/>
    </location>
</feature>
<feature type="turn" evidence="16">
    <location>
        <begin position="104"/>
        <end position="106"/>
    </location>
</feature>
<feature type="strand" evidence="16">
    <location>
        <begin position="107"/>
        <end position="112"/>
    </location>
</feature>
<feature type="helix" evidence="16">
    <location>
        <begin position="122"/>
        <end position="133"/>
    </location>
</feature>
<feature type="strand" evidence="16">
    <location>
        <begin position="139"/>
        <end position="142"/>
    </location>
</feature>
<feature type="strand" evidence="16">
    <location>
        <begin position="148"/>
        <end position="150"/>
    </location>
</feature>
<feature type="helix" evidence="16">
    <location>
        <begin position="159"/>
        <end position="161"/>
    </location>
</feature>
<feature type="helix" evidence="16">
    <location>
        <begin position="162"/>
        <end position="171"/>
    </location>
</feature>
<feature type="strand" evidence="16">
    <location>
        <begin position="175"/>
        <end position="177"/>
    </location>
</feature>
<feature type="turn" evidence="16">
    <location>
        <begin position="189"/>
        <end position="192"/>
    </location>
</feature>
<feature type="helix" evidence="16">
    <location>
        <begin position="193"/>
        <end position="206"/>
    </location>
</feature>
<feature type="turn" evidence="16">
    <location>
        <begin position="211"/>
        <end position="213"/>
    </location>
</feature>
<feature type="strand" evidence="16">
    <location>
        <begin position="219"/>
        <end position="221"/>
    </location>
</feature>
<feature type="helix" evidence="16">
    <location>
        <begin position="222"/>
        <end position="225"/>
    </location>
</feature>
<feature type="turn" evidence="16">
    <location>
        <begin position="226"/>
        <end position="231"/>
    </location>
</feature>
<feature type="helix" evidence="16">
    <location>
        <begin position="232"/>
        <end position="241"/>
    </location>
</feature>
<feature type="helix" evidence="16">
    <location>
        <begin position="247"/>
        <end position="250"/>
    </location>
</feature>
<feature type="turn" evidence="16">
    <location>
        <begin position="251"/>
        <end position="254"/>
    </location>
</feature>
<feature type="strand" evidence="16">
    <location>
        <begin position="255"/>
        <end position="258"/>
    </location>
</feature>
<feature type="helix" evidence="16">
    <location>
        <begin position="264"/>
        <end position="273"/>
    </location>
</feature>
<feature type="helix" evidence="16">
    <location>
        <begin position="276"/>
        <end position="278"/>
    </location>
</feature>
<feature type="turn" evidence="15">
    <location>
        <begin position="285"/>
        <end position="287"/>
    </location>
</feature>
<feature type="turn" evidence="16">
    <location>
        <begin position="294"/>
        <end position="296"/>
    </location>
</feature>
<feature type="strand" evidence="16">
    <location>
        <begin position="297"/>
        <end position="299"/>
    </location>
</feature>
<feature type="helix" evidence="16">
    <location>
        <begin position="303"/>
        <end position="309"/>
    </location>
</feature>
<feature type="helix" evidence="16">
    <location>
        <begin position="314"/>
        <end position="321"/>
    </location>
</feature>
<feature type="helix" evidence="16">
    <location>
        <begin position="323"/>
        <end position="328"/>
    </location>
</feature>
<feature type="helix" evidence="16">
    <location>
        <begin position="330"/>
        <end position="337"/>
    </location>
</feature>
<feature type="turn" evidence="16">
    <location>
        <begin position="338"/>
        <end position="340"/>
    </location>
</feature>
<name>LIGJ_SPHSK</name>
<keyword id="KW-0002">3D-structure</keyword>
<keyword id="KW-0058">Aromatic hydrocarbons catabolism</keyword>
<keyword id="KW-0456">Lyase</keyword>
<keyword id="KW-0479">Metal-binding</keyword>
<keyword id="KW-1185">Reference proteome</keyword>
<keyword id="KW-0862">Zinc</keyword>
<reference key="1">
    <citation type="journal article" date="2000" name="J. Bacteriol.">
        <title>The 4-oxalomesaconate hydratase gene, involved in the protocatechuate 4,5-cleavage pathway, is essential to vanillate and syringate degradation in Sphingomonas paucimobilis SYK-6.</title>
        <authorList>
            <person name="Hara H."/>
            <person name="Masai E."/>
            <person name="Katayama Y."/>
            <person name="Fukuda M."/>
        </authorList>
    </citation>
    <scope>NUCLEOTIDE SEQUENCE [GENOMIC DNA]</scope>
    <scope>DISRUPTION PHENOTYPE</scope>
    <scope>PATHWAY</scope>
    <source>
        <strain>NBRC 103272 / SYK-6</strain>
    </source>
</reference>
<reference key="2">
    <citation type="journal article" date="2003" name="J. Bacteriol.">
        <title>Characterization of the 4-carboxy-4-hydroxy-2-oxoadipate aldolase gene and operon structure of the protocatechuate 4,5-cleavage pathway genes in Sphingomonas paucimobilis SYK-6.</title>
        <authorList>
            <person name="Hara H."/>
            <person name="Masai E."/>
            <person name="Miyauchi K."/>
            <person name="Katayama Y."/>
            <person name="Fukuda M."/>
        </authorList>
    </citation>
    <scope>NUCLEOTIDE SEQUENCE [GENOMIC DNA]</scope>
    <source>
        <strain>NBRC 103272 / SYK-6</strain>
    </source>
</reference>
<reference key="3">
    <citation type="journal article" date="2012" name="J. Bacteriol.">
        <title>Complete genome sequence of Sphingobium sp. strain SYK-6, a degrader of lignin-derived biaryls and monoaryls.</title>
        <authorList>
            <person name="Masai E."/>
            <person name="Kamimura N."/>
            <person name="Kasai D."/>
            <person name="Oguchi A."/>
            <person name="Ankai A."/>
            <person name="Fukui S."/>
            <person name="Takahashi M."/>
            <person name="Yashiro I."/>
            <person name="Sasaki H."/>
            <person name="Harada T."/>
            <person name="Nakamura S."/>
            <person name="Katano Y."/>
            <person name="Narita-Yamada S."/>
            <person name="Nakazawa H."/>
            <person name="Hara H."/>
            <person name="Katayama Y."/>
            <person name="Fukuda M."/>
            <person name="Yamazaki S."/>
            <person name="Fujita N."/>
        </authorList>
    </citation>
    <scope>NUCLEOTIDE SEQUENCE [LARGE SCALE GENOMIC DNA]</scope>
    <source>
        <strain>NBRC 103272 / SYK-6</strain>
    </source>
</reference>
<reference key="4">
    <citation type="journal article" date="2018" name="Biochemistry">
        <title>Functional annotation of LigU as a 1,3-allylic isomerase during the degradation of lignin in the protocatechuate 4,5-cleavage pathway from the soil bacterium Sphingobium sp. SYK-6.</title>
        <authorList>
            <person name="Hogancamp T.N."/>
            <person name="Raushel F.M."/>
        </authorList>
    </citation>
    <scope>FUNCTION</scope>
    <scope>CATALYTIC ACTIVITY</scope>
    <scope>PATHWAY</scope>
    <source>
        <strain>NBRC 103272 / SYK-6</strain>
    </source>
</reference>
<reference evidence="12 13 14" key="5">
    <citation type="journal article" date="2018" name="Biochemistry">
        <title>Structure and reaction mechanism of the LigJ hydratase: an enzyme critical for the bacterial degradation of lignin in the protocatechuate 4,5-cleavage pathway.</title>
        <authorList>
            <person name="Hogancamp T.N."/>
            <person name="Mabanglo M.F."/>
            <person name="Raushel F.M."/>
        </authorList>
    </citation>
    <scope>X-RAY CRYSTALLOGRAPHY (1.65 ANGSTROMS) OF WILD-TYPE AND MUTANT GLN-284 IN COMPLEXES WITH ZINC; (3Z)-2-KETO-4-CARBOXY-3-HEXENEDIOATE (KCH) AND (4S)-4-CARBOXY-4-HYDROXY-2-OXOADIPATE (CHA)</scope>
    <scope>MUTAGENESIS OF THR-190; TYR-194; HIS-223 AND GLU-284</scope>
    <scope>FUNCTION</scope>
    <scope>CATALYTIC ACTIVITY</scope>
    <scope>COFACTOR</scope>
    <scope>BIOPHYSICOCHEMICAL PROPERTIES</scope>
    <scope>SUBUNIT</scope>
    <scope>REACTION MECHANISM</scope>
    <source>
        <strain>NBRC 103272 / SYK-6</strain>
    </source>
</reference>
<evidence type="ECO:0000269" key="1">
    <source>
    </source>
</evidence>
<evidence type="ECO:0000269" key="2">
    <source>
    </source>
</evidence>
<evidence type="ECO:0000269" key="3">
    <source>
    </source>
</evidence>
<evidence type="ECO:0000303" key="4">
    <source>
    </source>
</evidence>
<evidence type="ECO:0000303" key="5">
    <source>
    </source>
</evidence>
<evidence type="ECO:0000305" key="6"/>
<evidence type="ECO:0000305" key="7">
    <source>
    </source>
</evidence>
<evidence type="ECO:0000305" key="8">
    <source>
    </source>
</evidence>
<evidence type="ECO:0000312" key="9">
    <source>
        <dbReference type="EMBL" id="BAK65927.1"/>
    </source>
</evidence>
<evidence type="ECO:0000312" key="10">
    <source>
        <dbReference type="PDB" id="6DWV"/>
    </source>
</evidence>
<evidence type="ECO:0000312" key="11">
    <source>
        <dbReference type="PDB" id="6DXS"/>
    </source>
</evidence>
<evidence type="ECO:0007744" key="12">
    <source>
        <dbReference type="PDB" id="6DWV"/>
    </source>
</evidence>
<evidence type="ECO:0007744" key="13">
    <source>
        <dbReference type="PDB" id="6DXQ"/>
    </source>
</evidence>
<evidence type="ECO:0007744" key="14">
    <source>
        <dbReference type="PDB" id="6DXS"/>
    </source>
</evidence>
<evidence type="ECO:0007829" key="15">
    <source>
        <dbReference type="PDB" id="6DXQ"/>
    </source>
</evidence>
<evidence type="ECO:0007829" key="16">
    <source>
        <dbReference type="PDB" id="6DXS"/>
    </source>
</evidence>
<sequence>MMMIIDCHGHYTVLPKAHDEWREQQKAAFKAGQPAPPYPEISDDEIRETIEANQLRLIKERGADMTIFSPRASAMAPHVGDQSVAVPWAQACNNLIARVVDLFPETFAGVCMLPQSPEADMTSSIAELERCVNELGFIGCNLNPDPGGGHFKHPPLTDRFWYPFYEKMVELDVPAMIHVSGSCNPAMHATGAYYLAADTIAFMQLLQGNLFADFPTLRFIIPHGGGAVPYHWGRFRGLADMLKQPSLDTLLMNNVFFDTCVYHQPGINLLADVIDNKNILFGSEMVGAVRGIDPTTGHYFDDTKRYIDALDISDQERHAIFEGNTRRVFPRLDAKLKARGL</sequence>
<protein>
    <recommendedName>
        <fullName evidence="7">2-keto-4-carboxy-3-hexenedioate hydratase</fullName>
        <shortName evidence="5">KCH hydratase</shortName>
        <ecNumber evidence="2 3">4.2.1.-</ecNumber>
    </recommendedName>
</protein>
<gene>
    <name evidence="4" type="primary">ligJ</name>
    <name evidence="9" type="ORF">SLG_12520</name>
</gene>
<organism>
    <name type="scientific">Sphingobium sp. (strain NBRC 103272 / SYK-6)</name>
    <dbReference type="NCBI Taxonomy" id="627192"/>
    <lineage>
        <taxon>Bacteria</taxon>
        <taxon>Pseudomonadati</taxon>
        <taxon>Pseudomonadota</taxon>
        <taxon>Alphaproteobacteria</taxon>
        <taxon>Sphingomonadales</taxon>
        <taxon>Sphingomonadaceae</taxon>
        <taxon>Sphingobium</taxon>
    </lineage>
</organism>
<comment type="function">
    <text evidence="1 2 3">Contributes to the degradation of lignin at the level of the protocatechuate 4,5-cleavage pathway. Catalyzes the hydration of the double bond of (3Z)-2-keto-4-carboxy-3-hexenedioate (KCH) to (4S)-4-carboxy-4-hydroxy-2-oxoadipate (CHA, also named (2S)-2-hydroxy-4-oxobutane-1,2,4-tricarboxylate) (PubMed:29658701, PubMed:30207699). Is involved in the catabolism of both vanillate and syringate (PubMed:11092855).</text>
</comment>
<comment type="catalytic activity">
    <reaction evidence="2 3">
        <text>(3Z)-2-oxo-4-carboxy-3-hexenedioate + H2O = (2S)-2-hydroxy-4-oxobutane-1,2,4-tricarboxylate</text>
        <dbReference type="Rhea" id="RHEA:58508"/>
        <dbReference type="ChEBI" id="CHEBI:15377"/>
        <dbReference type="ChEBI" id="CHEBI:142690"/>
        <dbReference type="ChEBI" id="CHEBI:142706"/>
    </reaction>
</comment>
<comment type="cofactor">
    <cofactor evidence="3">
        <name>Zn(2+)</name>
        <dbReference type="ChEBI" id="CHEBI:29105"/>
    </cofactor>
    <text evidence="3">Binds 1 zinc ion per subunit. The metal center contained within the active site of LigJ is not used to activate the water molecule but is utilized to activate the substrate via polarization of the carbonyl oxygen.</text>
</comment>
<comment type="biophysicochemical properties">
    <kinetics>
        <KM evidence="3">9.8 uM for (3Z)-2-keto-4-carboxy-3-hexenedioate (at pH 8.0)</KM>
        <text evidence="3">kcat is 25.6 sec(-1) (at pH 8.0).</text>
    </kinetics>
</comment>
<comment type="pathway">
    <text evidence="1 7">Secondary metabolite metabolism; lignin degradation.</text>
</comment>
<comment type="subunit">
    <text evidence="3">Homodimer.</text>
</comment>
<comment type="disruption phenotype">
    <text evidence="1">Cells lacking this gene catabolize vanillate and syringate with an accumulation of the enol form of oxalomesaconate (OMA), 2-pyrone-4,6-dicarboxylate (PDC), and a product that is likely to be KCH.</text>
</comment>
<comment type="similarity">
    <text evidence="6">Belongs to the metallo-dependent hydrolases superfamily.</text>
</comment>